<comment type="catalytic activity">
    <reaction evidence="1">
        <text>1-(5-phospho-beta-D-ribosyl)-5-[(5-phospho-beta-D-ribosylamino)methylideneamino]imidazole-4-carboxamide = 5-[(5-phospho-1-deoxy-D-ribulos-1-ylimino)methylamino]-1-(5-phospho-beta-D-ribosyl)imidazole-4-carboxamide</text>
        <dbReference type="Rhea" id="RHEA:15469"/>
        <dbReference type="ChEBI" id="CHEBI:58435"/>
        <dbReference type="ChEBI" id="CHEBI:58525"/>
        <dbReference type="EC" id="5.3.1.16"/>
    </reaction>
</comment>
<comment type="pathway">
    <text evidence="1">Amino-acid biosynthesis; L-histidine biosynthesis; L-histidine from 5-phospho-alpha-D-ribose 1-diphosphate: step 4/9.</text>
</comment>
<comment type="subcellular location">
    <subcellularLocation>
        <location evidence="1">Cytoplasm</location>
    </subcellularLocation>
</comment>
<comment type="similarity">
    <text evidence="1">Belongs to the HisA/HisF family.</text>
</comment>
<dbReference type="EC" id="5.3.1.16" evidence="1"/>
<dbReference type="EMBL" id="AP006841">
    <property type="protein sequence ID" value="BAD49800.1"/>
    <property type="molecule type" value="Genomic_DNA"/>
</dbReference>
<dbReference type="RefSeq" id="WP_011203120.1">
    <property type="nucleotide sequence ID" value="NC_006347.1"/>
</dbReference>
<dbReference type="RefSeq" id="YP_100334.1">
    <property type="nucleotide sequence ID" value="NC_006347.1"/>
</dbReference>
<dbReference type="SMR" id="Q64RT1"/>
<dbReference type="STRING" id="295405.BF3054"/>
<dbReference type="KEGG" id="bfr:BF3054"/>
<dbReference type="PATRIC" id="fig|295405.11.peg.2924"/>
<dbReference type="HOGENOM" id="CLU_048577_1_2_10"/>
<dbReference type="OrthoDB" id="9807749at2"/>
<dbReference type="UniPathway" id="UPA00031">
    <property type="reaction ID" value="UER00009"/>
</dbReference>
<dbReference type="Proteomes" id="UP000002197">
    <property type="component" value="Chromosome"/>
</dbReference>
<dbReference type="GO" id="GO:0005737">
    <property type="term" value="C:cytoplasm"/>
    <property type="evidence" value="ECO:0007669"/>
    <property type="project" value="UniProtKB-SubCell"/>
</dbReference>
<dbReference type="GO" id="GO:0003949">
    <property type="term" value="F:1-(5-phosphoribosyl)-5-[(5-phosphoribosylamino)methylideneamino]imidazole-4-carboxamide isomerase activity"/>
    <property type="evidence" value="ECO:0007669"/>
    <property type="project" value="UniProtKB-UniRule"/>
</dbReference>
<dbReference type="GO" id="GO:0000105">
    <property type="term" value="P:L-histidine biosynthetic process"/>
    <property type="evidence" value="ECO:0007669"/>
    <property type="project" value="UniProtKB-UniRule"/>
</dbReference>
<dbReference type="GO" id="GO:0000162">
    <property type="term" value="P:L-tryptophan biosynthetic process"/>
    <property type="evidence" value="ECO:0007669"/>
    <property type="project" value="TreeGrafter"/>
</dbReference>
<dbReference type="CDD" id="cd04732">
    <property type="entry name" value="HisA"/>
    <property type="match status" value="1"/>
</dbReference>
<dbReference type="FunFam" id="3.20.20.70:FF:000009">
    <property type="entry name" value="1-(5-phosphoribosyl)-5-[(5-phosphoribosylamino)methylideneamino] imidazole-4-carboxamide isomerase"/>
    <property type="match status" value="1"/>
</dbReference>
<dbReference type="Gene3D" id="3.20.20.70">
    <property type="entry name" value="Aldolase class I"/>
    <property type="match status" value="1"/>
</dbReference>
<dbReference type="HAMAP" id="MF_01014">
    <property type="entry name" value="HisA"/>
    <property type="match status" value="1"/>
</dbReference>
<dbReference type="InterPro" id="IPR013785">
    <property type="entry name" value="Aldolase_TIM"/>
</dbReference>
<dbReference type="InterPro" id="IPR006062">
    <property type="entry name" value="His_biosynth"/>
</dbReference>
<dbReference type="InterPro" id="IPR006063">
    <property type="entry name" value="HisA_bact_arch"/>
</dbReference>
<dbReference type="InterPro" id="IPR044524">
    <property type="entry name" value="Isoase_HisA-like"/>
</dbReference>
<dbReference type="InterPro" id="IPR023016">
    <property type="entry name" value="Isoase_HisA-like_bact"/>
</dbReference>
<dbReference type="InterPro" id="IPR011060">
    <property type="entry name" value="RibuloseP-bd_barrel"/>
</dbReference>
<dbReference type="NCBIfam" id="TIGR00007">
    <property type="entry name" value="1-(5-phosphoribosyl)-5-[(5-phosphoribosylamino)methylideneamino]imidazole-4-carboxamide isomerase"/>
    <property type="match status" value="1"/>
</dbReference>
<dbReference type="PANTHER" id="PTHR43090">
    <property type="entry name" value="1-(5-PHOSPHORIBOSYL)-5-[(5-PHOSPHORIBOSYLAMINO)METHYLIDENEAMINO] IMIDAZOLE-4-CARBOXAMIDE ISOMERASE"/>
    <property type="match status" value="1"/>
</dbReference>
<dbReference type="PANTHER" id="PTHR43090:SF2">
    <property type="entry name" value="1-(5-PHOSPHORIBOSYL)-5-[(5-PHOSPHORIBOSYLAMINO)METHYLIDENEAMINO] IMIDAZOLE-4-CARBOXAMIDE ISOMERASE"/>
    <property type="match status" value="1"/>
</dbReference>
<dbReference type="Pfam" id="PF00977">
    <property type="entry name" value="His_biosynth"/>
    <property type="match status" value="1"/>
</dbReference>
<dbReference type="SUPFAM" id="SSF51366">
    <property type="entry name" value="Ribulose-phoshate binding barrel"/>
    <property type="match status" value="1"/>
</dbReference>
<reference key="1">
    <citation type="journal article" date="2004" name="Proc. Natl. Acad. Sci. U.S.A.">
        <title>Genomic analysis of Bacteroides fragilis reveals extensive DNA inversions regulating cell surface adaptation.</title>
        <authorList>
            <person name="Kuwahara T."/>
            <person name="Yamashita A."/>
            <person name="Hirakawa H."/>
            <person name="Nakayama H."/>
            <person name="Toh H."/>
            <person name="Okada N."/>
            <person name="Kuhara S."/>
            <person name="Hattori M."/>
            <person name="Hayashi T."/>
            <person name="Ohnishi Y."/>
        </authorList>
    </citation>
    <scope>NUCLEOTIDE SEQUENCE [LARGE SCALE GENOMIC DNA]</scope>
    <source>
        <strain>YCH46</strain>
    </source>
</reference>
<keyword id="KW-0028">Amino-acid biosynthesis</keyword>
<keyword id="KW-0963">Cytoplasm</keyword>
<keyword id="KW-0368">Histidine biosynthesis</keyword>
<keyword id="KW-0413">Isomerase</keyword>
<proteinExistence type="inferred from homology"/>
<evidence type="ECO:0000255" key="1">
    <source>
        <dbReference type="HAMAP-Rule" id="MF_01014"/>
    </source>
</evidence>
<sequence length="239" mass="26101">MIELIPAIDIIDGKCVRLSQGDYGSKKVYNENPVEVAKEFEANGIRRLHVVDLDGAASHHVVNYRTLDLIASRTSLIIDFGGGLKSDEDLIIAFENGAQMVTGGSIAVRNPDLFCRWIDRYGSGKIILGADVKDRRIAVNGWKVESTCELFPFLKDYTQKGIEKVICTDISCDGMLAGPSLDLYKEILAEHPTLYLIASGGVSSIADIEALHEAGVPAVIFGKALYEGRITLKELQAFL</sequence>
<name>HIS4_BACFR</name>
<protein>
    <recommendedName>
        <fullName evidence="1">1-(5-phosphoribosyl)-5-[(5-phosphoribosylamino)methylideneamino] imidazole-4-carboxamide isomerase</fullName>
        <ecNumber evidence="1">5.3.1.16</ecNumber>
    </recommendedName>
    <alternativeName>
        <fullName evidence="1">Phosphoribosylformimino-5-aminoimidazole carboxamide ribotide isomerase</fullName>
    </alternativeName>
</protein>
<organism>
    <name type="scientific">Bacteroides fragilis (strain YCH46)</name>
    <dbReference type="NCBI Taxonomy" id="295405"/>
    <lineage>
        <taxon>Bacteria</taxon>
        <taxon>Pseudomonadati</taxon>
        <taxon>Bacteroidota</taxon>
        <taxon>Bacteroidia</taxon>
        <taxon>Bacteroidales</taxon>
        <taxon>Bacteroidaceae</taxon>
        <taxon>Bacteroides</taxon>
    </lineage>
</organism>
<accession>Q64RT1</accession>
<feature type="chain" id="PRO_0000141973" description="1-(5-phosphoribosyl)-5-[(5-phosphoribosylamino)methylideneamino] imidazole-4-carboxamide isomerase">
    <location>
        <begin position="1"/>
        <end position="239"/>
    </location>
</feature>
<feature type="active site" description="Proton acceptor" evidence="1">
    <location>
        <position position="9"/>
    </location>
</feature>
<feature type="active site" description="Proton donor" evidence="1">
    <location>
        <position position="131"/>
    </location>
</feature>
<gene>
    <name evidence="1" type="primary">hisA</name>
    <name type="ordered locus">BF3054</name>
</gene>